<gene>
    <name evidence="1" type="primary">ribH</name>
    <name type="ordered locus">GSU1691</name>
</gene>
<evidence type="ECO:0000255" key="1">
    <source>
        <dbReference type="HAMAP-Rule" id="MF_00178"/>
    </source>
</evidence>
<organism>
    <name type="scientific">Geobacter sulfurreducens (strain ATCC 51573 / DSM 12127 / PCA)</name>
    <dbReference type="NCBI Taxonomy" id="243231"/>
    <lineage>
        <taxon>Bacteria</taxon>
        <taxon>Pseudomonadati</taxon>
        <taxon>Thermodesulfobacteriota</taxon>
        <taxon>Desulfuromonadia</taxon>
        <taxon>Geobacterales</taxon>
        <taxon>Geobacteraceae</taxon>
        <taxon>Geobacter</taxon>
    </lineage>
</organism>
<sequence length="155" mass="16511">MPRFIEGKLDATGLRFGIIVSRFNSFIGERLLEGALDALVRHGGDDGDIDVVRVPGAFEIPLTAQKLVQKGNYDAVICLGAVIRGSTPHFDYVAAEVSKGIAHVSLATGVPVVFGVLTTDTIEQAIERAGTKAGNKGFDAAVTAIETARLYRELR</sequence>
<keyword id="KW-1185">Reference proteome</keyword>
<keyword id="KW-0686">Riboflavin biosynthesis</keyword>
<keyword id="KW-0808">Transferase</keyword>
<feature type="chain" id="PRO_0000134758" description="6,7-dimethyl-8-ribityllumazine synthase">
    <location>
        <begin position="1"/>
        <end position="155"/>
    </location>
</feature>
<feature type="active site" description="Proton donor" evidence="1">
    <location>
        <position position="89"/>
    </location>
</feature>
<feature type="binding site" evidence="1">
    <location>
        <position position="23"/>
    </location>
    <ligand>
        <name>5-amino-6-(D-ribitylamino)uracil</name>
        <dbReference type="ChEBI" id="CHEBI:15934"/>
    </ligand>
</feature>
<feature type="binding site" evidence="1">
    <location>
        <begin position="57"/>
        <end position="59"/>
    </location>
    <ligand>
        <name>5-amino-6-(D-ribitylamino)uracil</name>
        <dbReference type="ChEBI" id="CHEBI:15934"/>
    </ligand>
</feature>
<feature type="binding site" evidence="1">
    <location>
        <begin position="81"/>
        <end position="83"/>
    </location>
    <ligand>
        <name>5-amino-6-(D-ribitylamino)uracil</name>
        <dbReference type="ChEBI" id="CHEBI:15934"/>
    </ligand>
</feature>
<feature type="binding site" evidence="1">
    <location>
        <begin position="86"/>
        <end position="87"/>
    </location>
    <ligand>
        <name>(2S)-2-hydroxy-3-oxobutyl phosphate</name>
        <dbReference type="ChEBI" id="CHEBI:58830"/>
    </ligand>
</feature>
<feature type="binding site" evidence="1">
    <location>
        <position position="114"/>
    </location>
    <ligand>
        <name>5-amino-6-(D-ribitylamino)uracil</name>
        <dbReference type="ChEBI" id="CHEBI:15934"/>
    </ligand>
</feature>
<feature type="binding site" evidence="1">
    <location>
        <position position="128"/>
    </location>
    <ligand>
        <name>(2S)-2-hydroxy-3-oxobutyl phosphate</name>
        <dbReference type="ChEBI" id="CHEBI:58830"/>
    </ligand>
</feature>
<comment type="function">
    <text evidence="1">Catalyzes the formation of 6,7-dimethyl-8-ribityllumazine by condensation of 5-amino-6-(D-ribitylamino)uracil with 3,4-dihydroxy-2-butanone 4-phosphate. This is the penultimate step in the biosynthesis of riboflavin.</text>
</comment>
<comment type="catalytic activity">
    <reaction evidence="1">
        <text>(2S)-2-hydroxy-3-oxobutyl phosphate + 5-amino-6-(D-ribitylamino)uracil = 6,7-dimethyl-8-(1-D-ribityl)lumazine + phosphate + 2 H2O + H(+)</text>
        <dbReference type="Rhea" id="RHEA:26152"/>
        <dbReference type="ChEBI" id="CHEBI:15377"/>
        <dbReference type="ChEBI" id="CHEBI:15378"/>
        <dbReference type="ChEBI" id="CHEBI:15934"/>
        <dbReference type="ChEBI" id="CHEBI:43474"/>
        <dbReference type="ChEBI" id="CHEBI:58201"/>
        <dbReference type="ChEBI" id="CHEBI:58830"/>
        <dbReference type="EC" id="2.5.1.78"/>
    </reaction>
</comment>
<comment type="pathway">
    <text evidence="1">Cofactor biosynthesis; riboflavin biosynthesis; riboflavin from 2-hydroxy-3-oxobutyl phosphate and 5-amino-6-(D-ribitylamino)uracil: step 1/2.</text>
</comment>
<comment type="similarity">
    <text evidence="1">Belongs to the DMRL synthase family.</text>
</comment>
<protein>
    <recommendedName>
        <fullName evidence="1">6,7-dimethyl-8-ribityllumazine synthase</fullName>
        <shortName evidence="1">DMRL synthase</shortName>
        <shortName evidence="1">LS</shortName>
        <shortName evidence="1">Lumazine synthase</shortName>
        <ecNumber evidence="1">2.5.1.78</ecNumber>
    </recommendedName>
</protein>
<name>RISB_GEOSL</name>
<reference key="1">
    <citation type="journal article" date="2003" name="Science">
        <title>Genome of Geobacter sulfurreducens: metal reduction in subsurface environments.</title>
        <authorList>
            <person name="Methe B.A."/>
            <person name="Nelson K.E."/>
            <person name="Eisen J.A."/>
            <person name="Paulsen I.T."/>
            <person name="Nelson W.C."/>
            <person name="Heidelberg J.F."/>
            <person name="Wu D."/>
            <person name="Wu M."/>
            <person name="Ward N.L."/>
            <person name="Beanan M.J."/>
            <person name="Dodson R.J."/>
            <person name="Madupu R."/>
            <person name="Brinkac L.M."/>
            <person name="Daugherty S.C."/>
            <person name="DeBoy R.T."/>
            <person name="Durkin A.S."/>
            <person name="Gwinn M.L."/>
            <person name="Kolonay J.F."/>
            <person name="Sullivan S.A."/>
            <person name="Haft D.H."/>
            <person name="Selengut J."/>
            <person name="Davidsen T.M."/>
            <person name="Zafar N."/>
            <person name="White O."/>
            <person name="Tran B."/>
            <person name="Romero C."/>
            <person name="Forberger H.A."/>
            <person name="Weidman J.F."/>
            <person name="Khouri H.M."/>
            <person name="Feldblyum T.V."/>
            <person name="Utterback T.R."/>
            <person name="Van Aken S.E."/>
            <person name="Lovley D.R."/>
            <person name="Fraser C.M."/>
        </authorList>
    </citation>
    <scope>NUCLEOTIDE SEQUENCE [LARGE SCALE GENOMIC DNA]</scope>
    <source>
        <strain>ATCC 51573 / DSM 12127 / PCA</strain>
    </source>
</reference>
<accession>P61723</accession>
<proteinExistence type="inferred from homology"/>
<dbReference type="EC" id="2.5.1.78" evidence="1"/>
<dbReference type="EMBL" id="AE017180">
    <property type="protein sequence ID" value="AAR35069.1"/>
    <property type="molecule type" value="Genomic_DNA"/>
</dbReference>
<dbReference type="RefSeq" id="NP_952742.1">
    <property type="nucleotide sequence ID" value="NC_002939.5"/>
</dbReference>
<dbReference type="SMR" id="P61723"/>
<dbReference type="FunCoup" id="P61723">
    <property type="interactions" value="539"/>
</dbReference>
<dbReference type="STRING" id="243231.GSU1691"/>
<dbReference type="EnsemblBacteria" id="AAR35069">
    <property type="protein sequence ID" value="AAR35069"/>
    <property type="gene ID" value="GSU1691"/>
</dbReference>
<dbReference type="KEGG" id="gsu:GSU1691"/>
<dbReference type="PATRIC" id="fig|243231.5.peg.1733"/>
<dbReference type="eggNOG" id="COG0054">
    <property type="taxonomic scope" value="Bacteria"/>
</dbReference>
<dbReference type="HOGENOM" id="CLU_089358_1_1_7"/>
<dbReference type="InParanoid" id="P61723"/>
<dbReference type="OrthoDB" id="9809709at2"/>
<dbReference type="UniPathway" id="UPA00275">
    <property type="reaction ID" value="UER00404"/>
</dbReference>
<dbReference type="Proteomes" id="UP000000577">
    <property type="component" value="Chromosome"/>
</dbReference>
<dbReference type="GO" id="GO:0005737">
    <property type="term" value="C:cytoplasm"/>
    <property type="evidence" value="ECO:0000318"/>
    <property type="project" value="GO_Central"/>
</dbReference>
<dbReference type="GO" id="GO:0005829">
    <property type="term" value="C:cytosol"/>
    <property type="evidence" value="ECO:0000318"/>
    <property type="project" value="GO_Central"/>
</dbReference>
<dbReference type="GO" id="GO:0009349">
    <property type="term" value="C:riboflavin synthase complex"/>
    <property type="evidence" value="ECO:0007669"/>
    <property type="project" value="InterPro"/>
</dbReference>
<dbReference type="GO" id="GO:0000906">
    <property type="term" value="F:6,7-dimethyl-8-ribityllumazine synthase activity"/>
    <property type="evidence" value="ECO:0000318"/>
    <property type="project" value="GO_Central"/>
</dbReference>
<dbReference type="GO" id="GO:0009231">
    <property type="term" value="P:riboflavin biosynthetic process"/>
    <property type="evidence" value="ECO:0000318"/>
    <property type="project" value="GO_Central"/>
</dbReference>
<dbReference type="CDD" id="cd09209">
    <property type="entry name" value="Lumazine_synthase-I"/>
    <property type="match status" value="1"/>
</dbReference>
<dbReference type="FunFam" id="3.40.50.960:FF:000001">
    <property type="entry name" value="6,7-dimethyl-8-ribityllumazine synthase"/>
    <property type="match status" value="1"/>
</dbReference>
<dbReference type="Gene3D" id="3.40.50.960">
    <property type="entry name" value="Lumazine/riboflavin synthase"/>
    <property type="match status" value="1"/>
</dbReference>
<dbReference type="HAMAP" id="MF_00178">
    <property type="entry name" value="Lumazine_synth"/>
    <property type="match status" value="1"/>
</dbReference>
<dbReference type="InterPro" id="IPR034964">
    <property type="entry name" value="LS"/>
</dbReference>
<dbReference type="InterPro" id="IPR002180">
    <property type="entry name" value="LS/RS"/>
</dbReference>
<dbReference type="InterPro" id="IPR036467">
    <property type="entry name" value="LS/RS_sf"/>
</dbReference>
<dbReference type="NCBIfam" id="TIGR00114">
    <property type="entry name" value="lumazine-synth"/>
    <property type="match status" value="1"/>
</dbReference>
<dbReference type="NCBIfam" id="NF000812">
    <property type="entry name" value="PRK00061.1-4"/>
    <property type="match status" value="1"/>
</dbReference>
<dbReference type="PANTHER" id="PTHR21058:SF0">
    <property type="entry name" value="6,7-DIMETHYL-8-RIBITYLLUMAZINE SYNTHASE"/>
    <property type="match status" value="1"/>
</dbReference>
<dbReference type="PANTHER" id="PTHR21058">
    <property type="entry name" value="6,7-DIMETHYL-8-RIBITYLLUMAZINE SYNTHASE DMRL SYNTHASE LUMAZINE SYNTHASE"/>
    <property type="match status" value="1"/>
</dbReference>
<dbReference type="Pfam" id="PF00885">
    <property type="entry name" value="DMRL_synthase"/>
    <property type="match status" value="1"/>
</dbReference>
<dbReference type="SUPFAM" id="SSF52121">
    <property type="entry name" value="Lumazine synthase"/>
    <property type="match status" value="1"/>
</dbReference>